<evidence type="ECO:0000250" key="1">
    <source>
        <dbReference type="UniProtKB" id="P69441"/>
    </source>
</evidence>
<evidence type="ECO:0000255" key="2"/>
<evidence type="ECO:0000269" key="3">
    <source>
    </source>
</evidence>
<evidence type="ECO:0000305" key="4"/>
<evidence type="ECO:0000305" key="5">
    <source>
    </source>
</evidence>
<gene>
    <name type="primary">ADK</name>
    <name type="ordered locus">At2g37250</name>
    <name type="ORF">F3G5.4</name>
</gene>
<protein>
    <recommendedName>
        <fullName>Adenylate kinase 1, chloroplastic</fullName>
        <shortName>AK 1</shortName>
        <shortName>AtPADK1</shortName>
        <ecNumber>2.7.4.3</ecNumber>
    </recommendedName>
    <alternativeName>
        <fullName>ATP-AMP transphosphorylase 1</fullName>
    </alternativeName>
    <alternativeName>
        <fullName>ATP:AMP phosphotransferase</fullName>
    </alternativeName>
    <alternativeName>
        <fullName>Adenylate monophosphate kinase 1</fullName>
        <shortName>AMK1</shortName>
    </alternativeName>
</protein>
<name>KAD1_ARATH</name>
<reference key="1">
    <citation type="journal article" date="1999" name="Nature">
        <title>Sequence and analysis of chromosome 2 of the plant Arabidopsis thaliana.</title>
        <authorList>
            <person name="Lin X."/>
            <person name="Kaul S."/>
            <person name="Rounsley S.D."/>
            <person name="Shea T.P."/>
            <person name="Benito M.-I."/>
            <person name="Town C.D."/>
            <person name="Fujii C.Y."/>
            <person name="Mason T.M."/>
            <person name="Bowman C.L."/>
            <person name="Barnstead M.E."/>
            <person name="Feldblyum T.V."/>
            <person name="Buell C.R."/>
            <person name="Ketchum K.A."/>
            <person name="Lee J.J."/>
            <person name="Ronning C.M."/>
            <person name="Koo H.L."/>
            <person name="Moffat K.S."/>
            <person name="Cronin L.A."/>
            <person name="Shen M."/>
            <person name="Pai G."/>
            <person name="Van Aken S."/>
            <person name="Umayam L."/>
            <person name="Tallon L.J."/>
            <person name="Gill J.E."/>
            <person name="Adams M.D."/>
            <person name="Carrera A.J."/>
            <person name="Creasy T.H."/>
            <person name="Goodman H.M."/>
            <person name="Somerville C.R."/>
            <person name="Copenhaver G.P."/>
            <person name="Preuss D."/>
            <person name="Nierman W.C."/>
            <person name="White O."/>
            <person name="Eisen J.A."/>
            <person name="Salzberg S.L."/>
            <person name="Fraser C.M."/>
            <person name="Venter J.C."/>
        </authorList>
    </citation>
    <scope>NUCLEOTIDE SEQUENCE [LARGE SCALE GENOMIC DNA]</scope>
    <source>
        <strain>cv. Columbia</strain>
    </source>
</reference>
<reference key="2">
    <citation type="journal article" date="2017" name="Plant J.">
        <title>Araport11: a complete reannotation of the Arabidopsis thaliana reference genome.</title>
        <authorList>
            <person name="Cheng C.Y."/>
            <person name="Krishnakumar V."/>
            <person name="Chan A.P."/>
            <person name="Thibaud-Nissen F."/>
            <person name="Schobel S."/>
            <person name="Town C.D."/>
        </authorList>
    </citation>
    <scope>GENOME REANNOTATION</scope>
    <source>
        <strain>cv. Columbia</strain>
    </source>
</reference>
<reference key="3">
    <citation type="journal article" date="2003" name="Science">
        <title>Empirical analysis of transcriptional activity in the Arabidopsis genome.</title>
        <authorList>
            <person name="Yamada K."/>
            <person name="Lim J."/>
            <person name="Dale J.M."/>
            <person name="Chen H."/>
            <person name="Shinn P."/>
            <person name="Palm C.J."/>
            <person name="Southwick A.M."/>
            <person name="Wu H.C."/>
            <person name="Kim C.J."/>
            <person name="Nguyen M."/>
            <person name="Pham P.K."/>
            <person name="Cheuk R.F."/>
            <person name="Karlin-Newmann G."/>
            <person name="Liu S.X."/>
            <person name="Lam B."/>
            <person name="Sakano H."/>
            <person name="Wu T."/>
            <person name="Yu G."/>
            <person name="Miranda M."/>
            <person name="Quach H.L."/>
            <person name="Tripp M."/>
            <person name="Chang C.H."/>
            <person name="Lee J.M."/>
            <person name="Toriumi M.J."/>
            <person name="Chan M.M."/>
            <person name="Tang C.C."/>
            <person name="Onodera C.S."/>
            <person name="Deng J.M."/>
            <person name="Akiyama K."/>
            <person name="Ansari Y."/>
            <person name="Arakawa T."/>
            <person name="Banh J."/>
            <person name="Banno F."/>
            <person name="Bowser L."/>
            <person name="Brooks S.Y."/>
            <person name="Carninci P."/>
            <person name="Chao Q."/>
            <person name="Choy N."/>
            <person name="Enju A."/>
            <person name="Goldsmith A.D."/>
            <person name="Gurjal M."/>
            <person name="Hansen N.F."/>
            <person name="Hayashizaki Y."/>
            <person name="Johnson-Hopson C."/>
            <person name="Hsuan V.W."/>
            <person name="Iida K."/>
            <person name="Karnes M."/>
            <person name="Khan S."/>
            <person name="Koesema E."/>
            <person name="Ishida J."/>
            <person name="Jiang P.X."/>
            <person name="Jones T."/>
            <person name="Kawai J."/>
            <person name="Kamiya A."/>
            <person name="Meyers C."/>
            <person name="Nakajima M."/>
            <person name="Narusaka M."/>
            <person name="Seki M."/>
            <person name="Sakurai T."/>
            <person name="Satou M."/>
            <person name="Tamse R."/>
            <person name="Vaysberg M."/>
            <person name="Wallender E.K."/>
            <person name="Wong C."/>
            <person name="Yamamura Y."/>
            <person name="Yuan S."/>
            <person name="Shinozaki K."/>
            <person name="Davis R.W."/>
            <person name="Theologis A."/>
            <person name="Ecker J.R."/>
        </authorList>
    </citation>
    <scope>NUCLEOTIDE SEQUENCE [LARGE SCALE MRNA]</scope>
    <source>
        <strain>cv. Columbia</strain>
    </source>
</reference>
<reference key="4">
    <citation type="submission" date="2002-03" db="EMBL/GenBank/DDBJ databases">
        <title>Full-length cDNA from Arabidopsis thaliana.</title>
        <authorList>
            <person name="Brover V.V."/>
            <person name="Troukhan M.E."/>
            <person name="Alexandrov N.A."/>
            <person name="Lu Y.-P."/>
            <person name="Flavell R.B."/>
            <person name="Feldmann K.A."/>
        </authorList>
    </citation>
    <scope>NUCLEOTIDE SEQUENCE [LARGE SCALE MRNA]</scope>
</reference>
<reference key="5">
    <citation type="journal article" date="2005" name="Plant Physiol.">
        <title>Deficiency of a plastidial adenylate kinase in Arabidopsis results in elevated photosynthetic amino acid biosynthesis and enhanced growth.</title>
        <authorList>
            <person name="Carrari F."/>
            <person name="Coll-Garcia D."/>
            <person name="Schauer N."/>
            <person name="Lytovchenko A."/>
            <person name="Palacios-Rojas N."/>
            <person name="Balbo I."/>
            <person name="Rosso M."/>
            <person name="Fernie A.R."/>
        </authorList>
    </citation>
    <scope>FUNCTION</scope>
    <scope>CATALYTIC ACTIVITY</scope>
    <scope>TISSUE SPECIFICITY</scope>
    <scope>DISRUPTION PHENOTYPE</scope>
</reference>
<reference key="6">
    <citation type="journal article" date="2008" name="Plant Physiol.">
        <title>Functions of chloroplastic adenylate kinases in Arabidopsis.</title>
        <authorList>
            <person name="Lange P.R."/>
            <person name="Geserick C."/>
            <person name="Tischendorf G."/>
            <person name="Zrenner R."/>
        </authorList>
    </citation>
    <scope>SUBCELLULAR LOCATION</scope>
</reference>
<dbReference type="EC" id="2.7.4.3"/>
<dbReference type="EMBL" id="AC005896">
    <property type="protein sequence ID" value="AAC98046.1"/>
    <property type="molecule type" value="Genomic_DNA"/>
</dbReference>
<dbReference type="EMBL" id="CP002685">
    <property type="protein sequence ID" value="AEC09372.1"/>
    <property type="molecule type" value="Genomic_DNA"/>
</dbReference>
<dbReference type="EMBL" id="AY056092">
    <property type="protein sequence ID" value="AAL06980.1"/>
    <property type="molecule type" value="mRNA"/>
</dbReference>
<dbReference type="EMBL" id="AY045694">
    <property type="protein sequence ID" value="AAK74052.1"/>
    <property type="molecule type" value="mRNA"/>
</dbReference>
<dbReference type="EMBL" id="AY052310">
    <property type="protein sequence ID" value="AAK96503.1"/>
    <property type="molecule type" value="mRNA"/>
</dbReference>
<dbReference type="EMBL" id="AY085585">
    <property type="protein sequence ID" value="AAM62806.1"/>
    <property type="molecule type" value="mRNA"/>
</dbReference>
<dbReference type="PIR" id="D84790">
    <property type="entry name" value="D84790"/>
</dbReference>
<dbReference type="RefSeq" id="NP_181262.1">
    <property type="nucleotide sequence ID" value="NM_129281.5"/>
</dbReference>
<dbReference type="SMR" id="Q9ZUU1"/>
<dbReference type="BioGRID" id="3646">
    <property type="interactions" value="1"/>
</dbReference>
<dbReference type="FunCoup" id="Q9ZUU1">
    <property type="interactions" value="578"/>
</dbReference>
<dbReference type="STRING" id="3702.Q9ZUU1"/>
<dbReference type="PaxDb" id="3702-AT2G37250.1"/>
<dbReference type="ProteomicsDB" id="232237"/>
<dbReference type="EnsemblPlants" id="AT2G37250.1">
    <property type="protein sequence ID" value="AT2G37250.1"/>
    <property type="gene ID" value="AT2G37250"/>
</dbReference>
<dbReference type="GeneID" id="818302"/>
<dbReference type="Gramene" id="AT2G37250.1">
    <property type="protein sequence ID" value="AT2G37250.1"/>
    <property type="gene ID" value="AT2G37250"/>
</dbReference>
<dbReference type="KEGG" id="ath:AT2G37250"/>
<dbReference type="Araport" id="AT2G37250"/>
<dbReference type="TAIR" id="AT2G37250">
    <property type="gene designation" value="ADK"/>
</dbReference>
<dbReference type="eggNOG" id="KOG3078">
    <property type="taxonomic scope" value="Eukaryota"/>
</dbReference>
<dbReference type="HOGENOM" id="CLU_032354_2_1_1"/>
<dbReference type="InParanoid" id="Q9ZUU1"/>
<dbReference type="OMA" id="SCTMLIC"/>
<dbReference type="OrthoDB" id="439792at2759"/>
<dbReference type="PhylomeDB" id="Q9ZUU1"/>
<dbReference type="BioCyc" id="ARA:AT2G37250-MONOMER"/>
<dbReference type="CD-CODE" id="4299E36E">
    <property type="entry name" value="Nucleolus"/>
</dbReference>
<dbReference type="PRO" id="PR:Q9ZUU1"/>
<dbReference type="Proteomes" id="UP000006548">
    <property type="component" value="Chromosome 2"/>
</dbReference>
<dbReference type="ExpressionAtlas" id="Q9ZUU1">
    <property type="expression patterns" value="baseline and differential"/>
</dbReference>
<dbReference type="GO" id="GO:0009507">
    <property type="term" value="C:chloroplast"/>
    <property type="evidence" value="ECO:0000314"/>
    <property type="project" value="TAIR"/>
</dbReference>
<dbReference type="GO" id="GO:0009570">
    <property type="term" value="C:chloroplast stroma"/>
    <property type="evidence" value="ECO:0000314"/>
    <property type="project" value="TAIR"/>
</dbReference>
<dbReference type="GO" id="GO:0005737">
    <property type="term" value="C:cytoplasm"/>
    <property type="evidence" value="ECO:0007005"/>
    <property type="project" value="TAIR"/>
</dbReference>
<dbReference type="GO" id="GO:0005634">
    <property type="term" value="C:nucleus"/>
    <property type="evidence" value="ECO:0007005"/>
    <property type="project" value="TAIR"/>
</dbReference>
<dbReference type="GO" id="GO:0004017">
    <property type="term" value="F:adenylate kinase activity"/>
    <property type="evidence" value="ECO:0000314"/>
    <property type="project" value="TAIR"/>
</dbReference>
<dbReference type="GO" id="GO:0005524">
    <property type="term" value="F:ATP binding"/>
    <property type="evidence" value="ECO:0007669"/>
    <property type="project" value="UniProtKB-KW"/>
</dbReference>
<dbReference type="GO" id="GO:0008652">
    <property type="term" value="P:amino acid biosynthetic process"/>
    <property type="evidence" value="ECO:0000315"/>
    <property type="project" value="TAIR"/>
</dbReference>
<dbReference type="GO" id="GO:0048364">
    <property type="term" value="P:root development"/>
    <property type="evidence" value="ECO:0000315"/>
    <property type="project" value="TAIR"/>
</dbReference>
<dbReference type="GO" id="GO:0048367">
    <property type="term" value="P:shoot system development"/>
    <property type="evidence" value="ECO:0000315"/>
    <property type="project" value="TAIR"/>
</dbReference>
<dbReference type="CDD" id="cd01428">
    <property type="entry name" value="ADK"/>
    <property type="match status" value="1"/>
</dbReference>
<dbReference type="Gene3D" id="3.40.50.300">
    <property type="entry name" value="P-loop containing nucleotide triphosphate hydrolases"/>
    <property type="match status" value="1"/>
</dbReference>
<dbReference type="HAMAP" id="MF_00235">
    <property type="entry name" value="Adenylate_kinase_Adk"/>
    <property type="match status" value="1"/>
</dbReference>
<dbReference type="InterPro" id="IPR006259">
    <property type="entry name" value="Adenyl_kin_sub"/>
</dbReference>
<dbReference type="InterPro" id="IPR000850">
    <property type="entry name" value="Adenylat/UMP-CMP_kin"/>
</dbReference>
<dbReference type="InterPro" id="IPR033690">
    <property type="entry name" value="Adenylat_kinase_CS"/>
</dbReference>
<dbReference type="InterPro" id="IPR027417">
    <property type="entry name" value="P-loop_NTPase"/>
</dbReference>
<dbReference type="NCBIfam" id="TIGR01351">
    <property type="entry name" value="adk"/>
    <property type="match status" value="1"/>
</dbReference>
<dbReference type="PANTHER" id="PTHR23359">
    <property type="entry name" value="NUCLEOTIDE KINASE"/>
    <property type="match status" value="1"/>
</dbReference>
<dbReference type="Pfam" id="PF00406">
    <property type="entry name" value="ADK"/>
    <property type="match status" value="1"/>
</dbReference>
<dbReference type="PRINTS" id="PR00094">
    <property type="entry name" value="ADENYLTKNASE"/>
</dbReference>
<dbReference type="SUPFAM" id="SSF52540">
    <property type="entry name" value="P-loop containing nucleoside triphosphate hydrolases"/>
    <property type="match status" value="1"/>
</dbReference>
<dbReference type="PROSITE" id="PS00113">
    <property type="entry name" value="ADENYLATE_KINASE"/>
    <property type="match status" value="1"/>
</dbReference>
<feature type="transit peptide" description="Chloroplast" evidence="2">
    <location>
        <begin position="1"/>
        <end position="36"/>
    </location>
</feature>
<feature type="chain" id="PRO_0000016554" description="Adenylate kinase 1, chloroplastic">
    <location>
        <begin position="37"/>
        <end position="284"/>
    </location>
</feature>
<feature type="region of interest" description="NMP" evidence="1">
    <location>
        <begin position="81"/>
        <end position="110"/>
    </location>
</feature>
<feature type="region of interest" description="LID" evidence="1">
    <location>
        <begin position="174"/>
        <end position="222"/>
    </location>
</feature>
<feature type="binding site" evidence="1">
    <location>
        <begin position="61"/>
        <end position="66"/>
    </location>
    <ligand>
        <name>ATP</name>
        <dbReference type="ChEBI" id="CHEBI:30616"/>
    </ligand>
</feature>
<feature type="binding site" evidence="1">
    <location>
        <position position="82"/>
    </location>
    <ligand>
        <name>AMP</name>
        <dbReference type="ChEBI" id="CHEBI:456215"/>
    </ligand>
</feature>
<feature type="binding site" evidence="1">
    <location>
        <position position="87"/>
    </location>
    <ligand>
        <name>AMP</name>
        <dbReference type="ChEBI" id="CHEBI:456215"/>
    </ligand>
</feature>
<feature type="binding site" evidence="1">
    <location>
        <begin position="108"/>
        <end position="110"/>
    </location>
    <ligand>
        <name>AMP</name>
        <dbReference type="ChEBI" id="CHEBI:456215"/>
    </ligand>
</feature>
<feature type="binding site" evidence="1">
    <location>
        <begin position="138"/>
        <end position="141"/>
    </location>
    <ligand>
        <name>AMP</name>
        <dbReference type="ChEBI" id="CHEBI:456215"/>
    </ligand>
</feature>
<feature type="binding site" evidence="1">
    <location>
        <position position="145"/>
    </location>
    <ligand>
        <name>AMP</name>
        <dbReference type="ChEBI" id="CHEBI:456215"/>
    </ligand>
</feature>
<feature type="binding site" evidence="1">
    <location>
        <position position="175"/>
    </location>
    <ligand>
        <name>ATP</name>
        <dbReference type="ChEBI" id="CHEBI:30616"/>
    </ligand>
</feature>
<feature type="binding site" evidence="1">
    <location>
        <position position="219"/>
    </location>
    <ligand>
        <name>AMP</name>
        <dbReference type="ChEBI" id="CHEBI:456215"/>
    </ligand>
</feature>
<feature type="binding site" evidence="1">
    <location>
        <position position="230"/>
    </location>
    <ligand>
        <name>AMP</name>
        <dbReference type="ChEBI" id="CHEBI:456215"/>
    </ligand>
</feature>
<feature type="binding site" evidence="1">
    <location>
        <position position="258"/>
    </location>
    <ligand>
        <name>ATP</name>
        <dbReference type="ChEBI" id="CHEBI:30616"/>
    </ligand>
</feature>
<comment type="function">
    <text evidence="3">Catalyzes the reversible transfer of the terminal phosphate group between ATP and AMP. Plays an important role in cellular energy homeostasis, adenine nucleotide metabolism and plant growth.</text>
</comment>
<comment type="catalytic activity">
    <reaction evidence="3">
        <text>AMP + ATP = 2 ADP</text>
        <dbReference type="Rhea" id="RHEA:12973"/>
        <dbReference type="ChEBI" id="CHEBI:30616"/>
        <dbReference type="ChEBI" id="CHEBI:456215"/>
        <dbReference type="ChEBI" id="CHEBI:456216"/>
        <dbReference type="EC" id="2.7.4.3"/>
    </reaction>
</comment>
<comment type="subunit">
    <text evidence="1">Monomer.</text>
</comment>
<comment type="subcellular location">
    <subcellularLocation>
        <location evidence="5">Plastid</location>
        <location evidence="5">Chloroplast stroma</location>
    </subcellularLocation>
</comment>
<comment type="tissue specificity">
    <text evidence="3">Highly expressed in flowers and at lower levels in roots, leaves and stems.</text>
</comment>
<comment type="disruption phenotype">
    <text evidence="3">Enhanced root growth and increased amino acid biosynthetis in the light period.</text>
</comment>
<comment type="similarity">
    <text evidence="4">Belongs to the adenylate kinase family.</text>
</comment>
<sequence>MARLVRVARSSSLFGFGNRFYSTSAEASHASSPSPFLHGGGASRVAPKDRNVQWVFLGCPGVGKGTYASRLSTLLGVPHIATGDLVREELASSGPLSQKLSEIVNQGKLVSDEIIVDLLSKRLEAGEARGESGFILDGFPRTMRQAEILGDVTDIDLVVNLKLPEEVLVDKCLGRRTCSQCGKGFNVAHINLKGENGRPGISMDPLLPPHQCMSKLVTRADDTEEVVKARLRIYNETSQPLEEYYRTKGKLMEFDLPGGIPESWPRLLEALRLDDYEEKQSVAA</sequence>
<keyword id="KW-0067">ATP-binding</keyword>
<keyword id="KW-0150">Chloroplast</keyword>
<keyword id="KW-0418">Kinase</keyword>
<keyword id="KW-0547">Nucleotide-binding</keyword>
<keyword id="KW-0934">Plastid</keyword>
<keyword id="KW-1185">Reference proteome</keyword>
<keyword id="KW-0808">Transferase</keyword>
<keyword id="KW-0809">Transit peptide</keyword>
<accession>Q9ZUU1</accession>
<proteinExistence type="evidence at protein level"/>
<organism>
    <name type="scientific">Arabidopsis thaliana</name>
    <name type="common">Mouse-ear cress</name>
    <dbReference type="NCBI Taxonomy" id="3702"/>
    <lineage>
        <taxon>Eukaryota</taxon>
        <taxon>Viridiplantae</taxon>
        <taxon>Streptophyta</taxon>
        <taxon>Embryophyta</taxon>
        <taxon>Tracheophyta</taxon>
        <taxon>Spermatophyta</taxon>
        <taxon>Magnoliopsida</taxon>
        <taxon>eudicotyledons</taxon>
        <taxon>Gunneridae</taxon>
        <taxon>Pentapetalae</taxon>
        <taxon>rosids</taxon>
        <taxon>malvids</taxon>
        <taxon>Brassicales</taxon>
        <taxon>Brassicaceae</taxon>
        <taxon>Camelineae</taxon>
        <taxon>Arabidopsis</taxon>
    </lineage>
</organism>